<protein>
    <recommendedName>
        <fullName evidence="1">UPF0342 protein M6_Spy0643</fullName>
    </recommendedName>
</protein>
<reference key="1">
    <citation type="journal article" date="2004" name="J. Infect. Dis.">
        <title>Progress toward characterization of the group A Streptococcus metagenome: complete genome sequence of a macrolide-resistant serotype M6 strain.</title>
        <authorList>
            <person name="Banks D.J."/>
            <person name="Porcella S.F."/>
            <person name="Barbian K.D."/>
            <person name="Beres S.B."/>
            <person name="Philips L.E."/>
            <person name="Voyich J.M."/>
            <person name="DeLeo F.R."/>
            <person name="Martin J.M."/>
            <person name="Somerville G.A."/>
            <person name="Musser J.M."/>
        </authorList>
    </citation>
    <scope>NUCLEOTIDE SEQUENCE [LARGE SCALE GENOMIC DNA]</scope>
    <source>
        <strain>ATCC BAA-946 / MGAS10394</strain>
    </source>
</reference>
<reference key="2">
    <citation type="submission" date="2000-05" db="UniProtKB">
        <title>Two-dimensional gel electrophoresis map of Streptococcus pyogenes proteins.</title>
        <authorList>
            <person name="Hogan D.A."/>
            <person name="Du P."/>
            <person name="Stevenson T.I."/>
            <person name="Whitton M."/>
            <person name="Kilby G.W."/>
            <person name="Rogers J."/>
            <person name="VanBogelen R.A."/>
        </authorList>
    </citation>
    <scope>PROTEIN SEQUENCE OF 52-76 AND 103-113</scope>
    <scope>MASS SPECTROMETRY</scope>
    <source>
        <strain>JRS4 / Serotype M6</strain>
    </source>
</reference>
<gene>
    <name type="ordered locus">M6_Spy0643</name>
</gene>
<comment type="mass spectrometry"/>
<comment type="similarity">
    <text evidence="1">Belongs to the UPF0342 family.</text>
</comment>
<proteinExistence type="evidence at protein level"/>
<dbReference type="EMBL" id="CP000003">
    <property type="protein sequence ID" value="AAT86778.1"/>
    <property type="molecule type" value="Genomic_DNA"/>
</dbReference>
<dbReference type="RefSeq" id="WP_002985134.1">
    <property type="nucleotide sequence ID" value="NC_006086.1"/>
</dbReference>
<dbReference type="SMR" id="Q5XCT5"/>
<dbReference type="KEGG" id="spa:M6_Spy0643"/>
<dbReference type="HOGENOM" id="CLU_140243_2_0_9"/>
<dbReference type="Proteomes" id="UP000001167">
    <property type="component" value="Chromosome"/>
</dbReference>
<dbReference type="Gene3D" id="1.20.1500.10">
    <property type="entry name" value="YheA/YmcA-like"/>
    <property type="match status" value="1"/>
</dbReference>
<dbReference type="HAMAP" id="MF_01526">
    <property type="entry name" value="UPF0342"/>
    <property type="match status" value="1"/>
</dbReference>
<dbReference type="InterPro" id="IPR010368">
    <property type="entry name" value="Com_YlbF"/>
</dbReference>
<dbReference type="InterPro" id="IPR023378">
    <property type="entry name" value="YheA/YmcA-like_dom_sf"/>
</dbReference>
<dbReference type="NCBIfam" id="NF010209">
    <property type="entry name" value="PRK13676.1-1"/>
    <property type="match status" value="1"/>
</dbReference>
<dbReference type="Pfam" id="PF06133">
    <property type="entry name" value="Com_YlbF"/>
    <property type="match status" value="1"/>
</dbReference>
<dbReference type="SUPFAM" id="SSF158622">
    <property type="entry name" value="YheA/YmcA-like"/>
    <property type="match status" value="1"/>
</dbReference>
<accession>Q5XCT5</accession>
<accession>P82564</accession>
<sequence>MSQEIYDYANQLERAVRALPEYQKVLEVKEAIQADASASQLFDEFVAMQEKIQGMMQSGQMPTAEEQTSIQELSQKIEANDQLKAYFEAQQALSVYMSDIERIVFAPLKDLVK</sequence>
<name>Y643_STRP6</name>
<feature type="chain" id="PRO_0000109998" description="UPF0342 protein M6_Spy0643">
    <location>
        <begin position="1"/>
        <end position="113"/>
    </location>
</feature>
<keyword id="KW-0903">Direct protein sequencing</keyword>
<evidence type="ECO:0000255" key="1">
    <source>
        <dbReference type="HAMAP-Rule" id="MF_01526"/>
    </source>
</evidence>
<evidence type="ECO:0000269" key="2">
    <source ref="2"/>
</evidence>
<organism>
    <name type="scientific">Streptococcus pyogenes serotype M6 (strain ATCC BAA-946 / MGAS10394)</name>
    <dbReference type="NCBI Taxonomy" id="286636"/>
    <lineage>
        <taxon>Bacteria</taxon>
        <taxon>Bacillati</taxon>
        <taxon>Bacillota</taxon>
        <taxon>Bacilli</taxon>
        <taxon>Lactobacillales</taxon>
        <taxon>Streptococcaceae</taxon>
        <taxon>Streptococcus</taxon>
    </lineage>
</organism>